<gene>
    <name type="primary">RESA</name>
</gene>
<accession>Q26005</accession>
<proteinExistence type="inferred from homology"/>
<sequence length="304" mass="35225">NSITYNFENINSNVDNGNQSKNISDLSYTDQKEILEKIVSYIVDISLYDIENTALNAAEQLLSDNSVDEKTLKKRAQSLKKLSSIMERYAGGKRNDKKAKKYDTQDVVGYIMHGISTINKEMKNQNENVPEHVQHNAEANVEHDAEENVEHDAEENVEHDAEENAEENVEENVEEVEENVEENVEENVEENVEENVEENVEENVEEVEENVEENVEENVEENVEENVEENVEENVEENVEENVEENVEEYDEENVEEVEENVEENVEENVEENVEENVEENVEENVEENVEEYDEENVEEHNGI</sequence>
<protein>
    <recommendedName>
        <fullName>Ring-infected erythrocyte surface antigen</fullName>
    </recommendedName>
</protein>
<name>RESA_PLAFP</name>
<feature type="chain" id="PRO_0000071161" description="Ring-infected erythrocyte surface antigen">
    <location>
        <begin position="1" status="less than"/>
        <end position="304" status="greater than"/>
    </location>
</feature>
<feature type="region of interest" description="Disordered" evidence="3">
    <location>
        <begin position="142"/>
        <end position="304"/>
    </location>
</feature>
<feature type="compositionally biased region" description="Basic and acidic residues" evidence="3">
    <location>
        <begin position="142"/>
        <end position="159"/>
    </location>
</feature>
<feature type="compositionally biased region" description="Acidic residues" evidence="3">
    <location>
        <begin position="160"/>
        <end position="298"/>
    </location>
</feature>
<feature type="glycosylation site" description="N-linked (GlcNAc...) asparagine" evidence="2">
    <location>
        <position position="18"/>
    </location>
</feature>
<feature type="glycosylation site" description="N-linked (GlcNAc...) asparagine" evidence="2">
    <location>
        <position position="22"/>
    </location>
</feature>
<feature type="non-terminal residue">
    <location>
        <position position="1"/>
    </location>
</feature>
<feature type="non-terminal residue">
    <location>
        <position position="304"/>
    </location>
</feature>
<comment type="function">
    <text evidence="1">May disrupt the normal intermolecular interactions of the cytoplasmic domain of band 3 and thereby facilitate the invagination of the red cell membrane which is necessary for the formation of the parasitophorous vacuole.</text>
</comment>
<comment type="subcellular location">
    <subcellularLocation>
        <location>Cell membrane</location>
        <topology>Peripheral membrane protein</topology>
        <orientation>Cytoplasmic side</orientation>
    </subcellularLocation>
    <text>Probably located on the cytoplasmic face of the membrane where it associates with components of the membrane skeleton.</text>
</comment>
<reference key="1">
    <citation type="journal article" date="1994" name="Exp. Parasitol.">
        <title>Plasmodium falciparum: a region of polymorphism in the 3' end of the gene for the ring-infected erythrocyte surface antigen.</title>
        <authorList>
            <person name="Kun J."/>
            <person name="Leet M."/>
            <person name="Anthony R.L."/>
            <person name="Kun J.E."/>
            <person name="Anders R.F."/>
        </authorList>
    </citation>
    <scope>NUCLEOTIDE SEQUENCE [GENOMIC DNA]</scope>
</reference>
<evidence type="ECO:0000250" key="1"/>
<evidence type="ECO:0000255" key="2"/>
<evidence type="ECO:0000256" key="3">
    <source>
        <dbReference type="SAM" id="MobiDB-lite"/>
    </source>
</evidence>
<organism>
    <name type="scientific">Plasmodium falciparum (isolate Palo Alto / Uganda)</name>
    <dbReference type="NCBI Taxonomy" id="57270"/>
    <lineage>
        <taxon>Eukaryota</taxon>
        <taxon>Sar</taxon>
        <taxon>Alveolata</taxon>
        <taxon>Apicomplexa</taxon>
        <taxon>Aconoidasida</taxon>
        <taxon>Haemosporida</taxon>
        <taxon>Plasmodiidae</taxon>
        <taxon>Plasmodium</taxon>
        <taxon>Plasmodium (Laverania)</taxon>
    </lineage>
</organism>
<dbReference type="EMBL" id="X55124">
    <property type="protein sequence ID" value="CAA38918.1"/>
    <property type="molecule type" value="Genomic_DNA"/>
</dbReference>
<dbReference type="PIR" id="S21342">
    <property type="entry name" value="S21342"/>
</dbReference>
<dbReference type="GlyCosmos" id="Q26005">
    <property type="glycosylation" value="2 sites, No reported glycans"/>
</dbReference>
<dbReference type="GO" id="GO:0005886">
    <property type="term" value="C:plasma membrane"/>
    <property type="evidence" value="ECO:0007669"/>
    <property type="project" value="UniProtKB-SubCell"/>
</dbReference>
<dbReference type="InterPro" id="IPR026894">
    <property type="entry name" value="DnaJ_X"/>
</dbReference>
<dbReference type="InterPro" id="IPR052423">
    <property type="entry name" value="EMIR"/>
</dbReference>
<dbReference type="PANTHER" id="PTHR44094">
    <property type="entry name" value="DNAJ HEAT SHOCK N-TERMINAL DOMAIN-CONTAINING PROTEIN"/>
    <property type="match status" value="1"/>
</dbReference>
<dbReference type="PANTHER" id="PTHR44094:SF8">
    <property type="entry name" value="DNAJ HEAT SHOCK N-TERMINAL DOMAIN-CONTAINING PROTEIN-RELATED"/>
    <property type="match status" value="1"/>
</dbReference>
<dbReference type="Pfam" id="PF14308">
    <property type="entry name" value="DnaJ-X"/>
    <property type="match status" value="1"/>
</dbReference>
<keyword id="KW-1003">Cell membrane</keyword>
<keyword id="KW-0325">Glycoprotein</keyword>
<keyword id="KW-0461">Malaria</keyword>
<keyword id="KW-0472">Membrane</keyword>
<keyword id="KW-0677">Repeat</keyword>